<accession>Q8WSV0</accession>
<keyword id="KW-0044">Antibiotic</keyword>
<keyword id="KW-0929">Antimicrobial</keyword>
<keyword id="KW-0391">Immunity</keyword>
<keyword id="KW-0399">Innate immunity</keyword>
<keyword id="KW-0964">Secreted</keyword>
<keyword id="KW-0732">Signal</keyword>
<reference key="1">
    <citation type="journal article" date="2002" name="J. Mol. Evol.">
        <title>Rapid evolution of the male-specific antibacterial protein andropin gene in Drosophila.</title>
        <authorList>
            <person name="Date-Ito A."/>
            <person name="Kasahara K."/>
            <person name="Sawai H."/>
            <person name="Chigusa S.I."/>
        </authorList>
    </citation>
    <scope>NUCLEOTIDE SEQUENCE [GENOMIC DNA]</scope>
</reference>
<sequence length="67" mass="7314">MKYFLVLVVLTLILAISVGQSDALFVDIIDNVENAIHKAAKTGIGMVKPIENIFIPNQQKKSTEASN</sequence>
<name>ANDP_DROOR</name>
<comment type="function">
    <text>Male-specific peptide with moderate activity against Gram-positive bacteria.</text>
</comment>
<comment type="subcellular location">
    <subcellularLocation>
        <location>Secreted</location>
    </subcellularLocation>
</comment>
<comment type="tissue specificity">
    <text>Ejaculatory duct of adult males.</text>
</comment>
<comment type="induction">
    <text>In response to mating.</text>
</comment>
<comment type="similarity">
    <text evidence="2">Belongs to the andropin family.</text>
</comment>
<feature type="signal peptide" evidence="1">
    <location>
        <begin position="1"/>
        <end position="19"/>
    </location>
</feature>
<feature type="chain" id="PRO_0000004953" description="Andropin">
    <location>
        <begin position="20"/>
        <end position="67"/>
    </location>
</feature>
<organism>
    <name type="scientific">Drosophila orena</name>
    <name type="common">Fruit fly</name>
    <dbReference type="NCBI Taxonomy" id="7233"/>
    <lineage>
        <taxon>Eukaryota</taxon>
        <taxon>Metazoa</taxon>
        <taxon>Ecdysozoa</taxon>
        <taxon>Arthropoda</taxon>
        <taxon>Hexapoda</taxon>
        <taxon>Insecta</taxon>
        <taxon>Pterygota</taxon>
        <taxon>Neoptera</taxon>
        <taxon>Endopterygota</taxon>
        <taxon>Diptera</taxon>
        <taxon>Brachycera</taxon>
        <taxon>Muscomorpha</taxon>
        <taxon>Ephydroidea</taxon>
        <taxon>Drosophilidae</taxon>
        <taxon>Drosophila</taxon>
        <taxon>Sophophora</taxon>
    </lineage>
</organism>
<gene>
    <name type="primary">Anp</name>
</gene>
<proteinExistence type="evidence at transcript level"/>
<dbReference type="EMBL" id="AB047045">
    <property type="protein sequence ID" value="BAB78550.1"/>
    <property type="molecule type" value="Genomic_DNA"/>
</dbReference>
<dbReference type="GO" id="GO:0005576">
    <property type="term" value="C:extracellular region"/>
    <property type="evidence" value="ECO:0000250"/>
    <property type="project" value="UniProtKB"/>
</dbReference>
<dbReference type="GO" id="GO:0050830">
    <property type="term" value="P:defense response to Gram-positive bacterium"/>
    <property type="evidence" value="ECO:0000250"/>
    <property type="project" value="UniProtKB"/>
</dbReference>
<dbReference type="GO" id="GO:0045087">
    <property type="term" value="P:innate immune response"/>
    <property type="evidence" value="ECO:0007669"/>
    <property type="project" value="UniProtKB-KW"/>
</dbReference>
<dbReference type="GO" id="GO:0006962">
    <property type="term" value="P:male-specific antibacterial humoral response"/>
    <property type="evidence" value="ECO:0000250"/>
    <property type="project" value="UniProtKB"/>
</dbReference>
<evidence type="ECO:0000255" key="1"/>
<evidence type="ECO:0000305" key="2"/>
<protein>
    <recommendedName>
        <fullName>Andropin</fullName>
    </recommendedName>
</protein>